<accession>Q4LA40</accession>
<feature type="chain" id="PRO_0000346277" description="D-ribose pyranase">
    <location>
        <begin position="1"/>
        <end position="129"/>
    </location>
</feature>
<feature type="active site" description="Proton donor" evidence="1">
    <location>
        <position position="20"/>
    </location>
</feature>
<feature type="binding site" evidence="1">
    <location>
        <position position="28"/>
    </location>
    <ligand>
        <name>substrate</name>
    </ligand>
</feature>
<feature type="binding site" evidence="1">
    <location>
        <position position="96"/>
    </location>
    <ligand>
        <name>substrate</name>
    </ligand>
</feature>
<feature type="binding site" evidence="1">
    <location>
        <begin position="118"/>
        <end position="120"/>
    </location>
    <ligand>
        <name>substrate</name>
    </ligand>
</feature>
<reference key="1">
    <citation type="journal article" date="2005" name="J. Bacteriol.">
        <title>Whole-genome sequencing of Staphylococcus haemolyticus uncovers the extreme plasticity of its genome and the evolution of human-colonizing staphylococcal species.</title>
        <authorList>
            <person name="Takeuchi F."/>
            <person name="Watanabe S."/>
            <person name="Baba T."/>
            <person name="Yuzawa H."/>
            <person name="Ito T."/>
            <person name="Morimoto Y."/>
            <person name="Kuroda M."/>
            <person name="Cui L."/>
            <person name="Takahashi M."/>
            <person name="Ankai A."/>
            <person name="Baba S."/>
            <person name="Fukui S."/>
            <person name="Lee J.C."/>
            <person name="Hiramatsu K."/>
        </authorList>
    </citation>
    <scope>NUCLEOTIDE SEQUENCE [LARGE SCALE GENOMIC DNA]</scope>
    <source>
        <strain>JCSC1435</strain>
    </source>
</reference>
<sequence length="129" mass="14355">MYKTGILNSDISKVLSDLGHTDQIVIADCGLPVPKDVKKIDLALTLGQPSFLEVYEVLKQHMEIEHVTIAEEMEVDNAPIFEQVTKDFSEIEQVNHETFKALTKNAKAIIRTGEATPYANIILQSGVIF</sequence>
<proteinExistence type="inferred from homology"/>
<dbReference type="EC" id="5.4.99.62" evidence="1"/>
<dbReference type="EMBL" id="AP006716">
    <property type="protein sequence ID" value="BAE03485.1"/>
    <property type="molecule type" value="Genomic_DNA"/>
</dbReference>
<dbReference type="RefSeq" id="WP_011274505.1">
    <property type="nucleotide sequence ID" value="NC_007168.1"/>
</dbReference>
<dbReference type="SMR" id="Q4LA40"/>
<dbReference type="GeneID" id="93779616"/>
<dbReference type="KEGG" id="sha:SH0176"/>
<dbReference type="eggNOG" id="COG1869">
    <property type="taxonomic scope" value="Bacteria"/>
</dbReference>
<dbReference type="HOGENOM" id="CLU_135498_0_0_9"/>
<dbReference type="OrthoDB" id="9805009at2"/>
<dbReference type="UniPathway" id="UPA00916">
    <property type="reaction ID" value="UER00888"/>
</dbReference>
<dbReference type="Proteomes" id="UP000000543">
    <property type="component" value="Chromosome"/>
</dbReference>
<dbReference type="GO" id="GO:0005829">
    <property type="term" value="C:cytosol"/>
    <property type="evidence" value="ECO:0007669"/>
    <property type="project" value="TreeGrafter"/>
</dbReference>
<dbReference type="GO" id="GO:0062193">
    <property type="term" value="F:D-ribose pyranase activity"/>
    <property type="evidence" value="ECO:0007669"/>
    <property type="project" value="UniProtKB-EC"/>
</dbReference>
<dbReference type="GO" id="GO:0016872">
    <property type="term" value="F:intramolecular lyase activity"/>
    <property type="evidence" value="ECO:0007669"/>
    <property type="project" value="UniProtKB-UniRule"/>
</dbReference>
<dbReference type="GO" id="GO:0048029">
    <property type="term" value="F:monosaccharide binding"/>
    <property type="evidence" value="ECO:0007669"/>
    <property type="project" value="InterPro"/>
</dbReference>
<dbReference type="GO" id="GO:0019303">
    <property type="term" value="P:D-ribose catabolic process"/>
    <property type="evidence" value="ECO:0007669"/>
    <property type="project" value="UniProtKB-UniRule"/>
</dbReference>
<dbReference type="Gene3D" id="3.40.1650.10">
    <property type="entry name" value="RbsD-like domain"/>
    <property type="match status" value="1"/>
</dbReference>
<dbReference type="HAMAP" id="MF_01661">
    <property type="entry name" value="D_rib_pyranase"/>
    <property type="match status" value="1"/>
</dbReference>
<dbReference type="InterPro" id="IPR023064">
    <property type="entry name" value="D-ribose_pyranase"/>
</dbReference>
<dbReference type="InterPro" id="IPR023750">
    <property type="entry name" value="RbsD-like_sf"/>
</dbReference>
<dbReference type="InterPro" id="IPR007721">
    <property type="entry name" value="RbsD_FucU"/>
</dbReference>
<dbReference type="NCBIfam" id="NF008761">
    <property type="entry name" value="PRK11797.1"/>
    <property type="match status" value="1"/>
</dbReference>
<dbReference type="PANTHER" id="PTHR37831">
    <property type="entry name" value="D-RIBOSE PYRANASE"/>
    <property type="match status" value="1"/>
</dbReference>
<dbReference type="PANTHER" id="PTHR37831:SF1">
    <property type="entry name" value="D-RIBOSE PYRANASE"/>
    <property type="match status" value="1"/>
</dbReference>
<dbReference type="Pfam" id="PF05025">
    <property type="entry name" value="RbsD_FucU"/>
    <property type="match status" value="1"/>
</dbReference>
<dbReference type="SUPFAM" id="SSF102546">
    <property type="entry name" value="RbsD-like"/>
    <property type="match status" value="1"/>
</dbReference>
<comment type="function">
    <text evidence="1">Catalyzes the interconversion of beta-pyran and beta-furan forms of D-ribose.</text>
</comment>
<comment type="catalytic activity">
    <reaction evidence="1">
        <text>beta-D-ribopyranose = beta-D-ribofuranose</text>
        <dbReference type="Rhea" id="RHEA:25432"/>
        <dbReference type="ChEBI" id="CHEBI:27476"/>
        <dbReference type="ChEBI" id="CHEBI:47002"/>
        <dbReference type="EC" id="5.4.99.62"/>
    </reaction>
</comment>
<comment type="pathway">
    <text evidence="1">Carbohydrate metabolism; D-ribose degradation; D-ribose 5-phosphate from beta-D-ribopyranose: step 1/2.</text>
</comment>
<comment type="subunit">
    <text evidence="1">Homodecamer.</text>
</comment>
<comment type="subcellular location">
    <subcellularLocation>
        <location evidence="1">Cytoplasm</location>
    </subcellularLocation>
</comment>
<comment type="similarity">
    <text evidence="1">Belongs to the RbsD / FucU family. RbsD subfamily.</text>
</comment>
<evidence type="ECO:0000255" key="1">
    <source>
        <dbReference type="HAMAP-Rule" id="MF_01661"/>
    </source>
</evidence>
<protein>
    <recommendedName>
        <fullName evidence="1">D-ribose pyranase</fullName>
        <ecNumber evidence="1">5.4.99.62</ecNumber>
    </recommendedName>
</protein>
<organism>
    <name type="scientific">Staphylococcus haemolyticus (strain JCSC1435)</name>
    <dbReference type="NCBI Taxonomy" id="279808"/>
    <lineage>
        <taxon>Bacteria</taxon>
        <taxon>Bacillati</taxon>
        <taxon>Bacillota</taxon>
        <taxon>Bacilli</taxon>
        <taxon>Bacillales</taxon>
        <taxon>Staphylococcaceae</taxon>
        <taxon>Staphylococcus</taxon>
    </lineage>
</organism>
<keyword id="KW-0119">Carbohydrate metabolism</keyword>
<keyword id="KW-0963">Cytoplasm</keyword>
<keyword id="KW-0413">Isomerase</keyword>
<name>RBSD_STAHJ</name>
<gene>
    <name evidence="1" type="primary">rbsD</name>
    <name type="ordered locus">SH0176</name>
</gene>